<name>NU1C_ILLOL</name>
<feature type="chain" id="PRO_0000298871" description="NAD(P)H-quinone oxidoreductase subunit 1, chloroplastic">
    <location>
        <begin position="1"/>
        <end position="364"/>
    </location>
</feature>
<feature type="transmembrane region" description="Helical" evidence="1">
    <location>
        <begin position="27"/>
        <end position="47"/>
    </location>
</feature>
<feature type="transmembrane region" description="Helical" evidence="1">
    <location>
        <begin position="98"/>
        <end position="118"/>
    </location>
</feature>
<feature type="transmembrane region" description="Helical" evidence="1">
    <location>
        <begin position="127"/>
        <end position="147"/>
    </location>
</feature>
<feature type="transmembrane region" description="Helical" evidence="1">
    <location>
        <begin position="255"/>
        <end position="275"/>
    </location>
</feature>
<feature type="transmembrane region" description="Helical" evidence="1">
    <location>
        <begin position="301"/>
        <end position="321"/>
    </location>
</feature>
<feature type="transmembrane region" description="Helical" evidence="1">
    <location>
        <begin position="337"/>
        <end position="357"/>
    </location>
</feature>
<evidence type="ECO:0000255" key="1">
    <source>
        <dbReference type="HAMAP-Rule" id="MF_01350"/>
    </source>
</evidence>
<reference key="1">
    <citation type="journal article" date="2007" name="Mol. Phylogenet. Evol.">
        <title>Phylogenetic and evolutionary implications of complete chloroplast genome sequences of four early-diverging angiosperms: Buxus (Buxaceae), Chloranthus (Chloranthaceae), Dioscorea (Dioscoreaceae), and Illicium (Schisandraceae).</title>
        <authorList>
            <person name="Hansen D.R."/>
            <person name="Dastidar S.G."/>
            <person name="Cai Z."/>
            <person name="Penaflor C."/>
            <person name="Kuehl J.V."/>
            <person name="Boore J.L."/>
            <person name="Jansen R.K."/>
        </authorList>
    </citation>
    <scope>NUCLEOTIDE SEQUENCE [LARGE SCALE GENOMIC DNA]</scope>
</reference>
<keyword id="KW-0150">Chloroplast</keyword>
<keyword id="KW-0472">Membrane</keyword>
<keyword id="KW-0520">NAD</keyword>
<keyword id="KW-0521">NADP</keyword>
<keyword id="KW-0934">Plastid</keyword>
<keyword id="KW-0618">Plastoquinone</keyword>
<keyword id="KW-0874">Quinone</keyword>
<keyword id="KW-0793">Thylakoid</keyword>
<keyword id="KW-1278">Translocase</keyword>
<keyword id="KW-0812">Transmembrane</keyword>
<keyword id="KW-1133">Transmembrane helix</keyword>
<proteinExistence type="inferred from homology"/>
<gene>
    <name evidence="1" type="primary">ndhA</name>
</gene>
<comment type="function">
    <text evidence="1">NDH shuttles electrons from NAD(P)H:plastoquinone, via FMN and iron-sulfur (Fe-S) centers, to quinones in the photosynthetic chain and possibly in a chloroplast respiratory chain. The immediate electron acceptor for the enzyme in this species is believed to be plastoquinone. Couples the redox reaction to proton translocation, and thus conserves the redox energy in a proton gradient.</text>
</comment>
<comment type="catalytic activity">
    <reaction evidence="1">
        <text>a plastoquinone + NADH + (n+1) H(+)(in) = a plastoquinol + NAD(+) + n H(+)(out)</text>
        <dbReference type="Rhea" id="RHEA:42608"/>
        <dbReference type="Rhea" id="RHEA-COMP:9561"/>
        <dbReference type="Rhea" id="RHEA-COMP:9562"/>
        <dbReference type="ChEBI" id="CHEBI:15378"/>
        <dbReference type="ChEBI" id="CHEBI:17757"/>
        <dbReference type="ChEBI" id="CHEBI:57540"/>
        <dbReference type="ChEBI" id="CHEBI:57945"/>
        <dbReference type="ChEBI" id="CHEBI:62192"/>
    </reaction>
</comment>
<comment type="catalytic activity">
    <reaction evidence="1">
        <text>a plastoquinone + NADPH + (n+1) H(+)(in) = a plastoquinol + NADP(+) + n H(+)(out)</text>
        <dbReference type="Rhea" id="RHEA:42612"/>
        <dbReference type="Rhea" id="RHEA-COMP:9561"/>
        <dbReference type="Rhea" id="RHEA-COMP:9562"/>
        <dbReference type="ChEBI" id="CHEBI:15378"/>
        <dbReference type="ChEBI" id="CHEBI:17757"/>
        <dbReference type="ChEBI" id="CHEBI:57783"/>
        <dbReference type="ChEBI" id="CHEBI:58349"/>
        <dbReference type="ChEBI" id="CHEBI:62192"/>
    </reaction>
</comment>
<comment type="subunit">
    <text evidence="1">NDH is composed of at least 16 different subunits, 5 of which are encoded in the nucleus.</text>
</comment>
<comment type="subcellular location">
    <subcellularLocation>
        <location evidence="1">Plastid</location>
        <location evidence="1">Chloroplast thylakoid membrane</location>
        <topology evidence="1">Multi-pass membrane protein</topology>
    </subcellularLocation>
</comment>
<comment type="similarity">
    <text evidence="1">Belongs to the complex I subunit 1 family.</text>
</comment>
<dbReference type="EC" id="7.1.1.-" evidence="1"/>
<dbReference type="EMBL" id="EF380354">
    <property type="protein sequence ID" value="ABQ52575.1"/>
    <property type="molecule type" value="Genomic_DNA"/>
</dbReference>
<dbReference type="RefSeq" id="YP_001294326.1">
    <property type="nucleotide sequence ID" value="NC_009600.1"/>
</dbReference>
<dbReference type="SMR" id="A6MN00"/>
<dbReference type="GeneID" id="5236710"/>
<dbReference type="GO" id="GO:0009535">
    <property type="term" value="C:chloroplast thylakoid membrane"/>
    <property type="evidence" value="ECO:0007669"/>
    <property type="project" value="UniProtKB-SubCell"/>
</dbReference>
<dbReference type="GO" id="GO:0003954">
    <property type="term" value="F:NADH dehydrogenase activity"/>
    <property type="evidence" value="ECO:0007669"/>
    <property type="project" value="TreeGrafter"/>
</dbReference>
<dbReference type="GO" id="GO:0016655">
    <property type="term" value="F:oxidoreductase activity, acting on NAD(P)H, quinone or similar compound as acceptor"/>
    <property type="evidence" value="ECO:0007669"/>
    <property type="project" value="UniProtKB-UniRule"/>
</dbReference>
<dbReference type="GO" id="GO:0048038">
    <property type="term" value="F:quinone binding"/>
    <property type="evidence" value="ECO:0007669"/>
    <property type="project" value="UniProtKB-KW"/>
</dbReference>
<dbReference type="GO" id="GO:0009060">
    <property type="term" value="P:aerobic respiration"/>
    <property type="evidence" value="ECO:0007669"/>
    <property type="project" value="TreeGrafter"/>
</dbReference>
<dbReference type="GO" id="GO:0019684">
    <property type="term" value="P:photosynthesis, light reaction"/>
    <property type="evidence" value="ECO:0007669"/>
    <property type="project" value="UniProtKB-UniRule"/>
</dbReference>
<dbReference type="HAMAP" id="MF_01350">
    <property type="entry name" value="NDH1_NuoH"/>
    <property type="match status" value="1"/>
</dbReference>
<dbReference type="InterPro" id="IPR001694">
    <property type="entry name" value="NADH_UbQ_OxRdtase_su1/FPO"/>
</dbReference>
<dbReference type="InterPro" id="IPR018086">
    <property type="entry name" value="NADH_UbQ_OxRdtase_su1_CS"/>
</dbReference>
<dbReference type="NCBIfam" id="NF004741">
    <property type="entry name" value="PRK06076.1-2"/>
    <property type="match status" value="1"/>
</dbReference>
<dbReference type="PANTHER" id="PTHR11432">
    <property type="entry name" value="NADH DEHYDROGENASE SUBUNIT 1"/>
    <property type="match status" value="1"/>
</dbReference>
<dbReference type="PANTHER" id="PTHR11432:SF3">
    <property type="entry name" value="NADH-UBIQUINONE OXIDOREDUCTASE CHAIN 1"/>
    <property type="match status" value="1"/>
</dbReference>
<dbReference type="Pfam" id="PF00146">
    <property type="entry name" value="NADHdh"/>
    <property type="match status" value="1"/>
</dbReference>
<dbReference type="PROSITE" id="PS00667">
    <property type="entry name" value="COMPLEX1_ND1_1"/>
    <property type="match status" value="1"/>
</dbReference>
<dbReference type="PROSITE" id="PS00668">
    <property type="entry name" value="COMPLEX1_ND1_2"/>
    <property type="match status" value="1"/>
</dbReference>
<protein>
    <recommendedName>
        <fullName evidence="1">NAD(P)H-quinone oxidoreductase subunit 1, chloroplastic</fullName>
        <ecNumber evidence="1">7.1.1.-</ecNumber>
    </recommendedName>
    <alternativeName>
        <fullName evidence="1">NAD(P)H dehydrogenase subunit 1</fullName>
        <shortName evidence="1">NDH subunit 1</shortName>
    </alternativeName>
    <alternativeName>
        <fullName evidence="1">NADH-plastoquinone oxidoreductase subunit 1</fullName>
    </alternativeName>
</protein>
<sequence length="364" mass="39897">MIIDTTEVQAINSFSRSESSKEFYGLIWLLVPIFTPVSGILIGVLVIVWLEREISAGIQQRIGPEYAGPLGILQALADGTKLLFKEDLLPSRGDIRLFSVGPSIAVISILLSYSVIPFGYRLIIADISIGVFLWIAISSIAPIGLLMSGYGSNNKYSFSGGLRAAAQSISYEIPLTPCVLSISLRLSNSSSTVDIVEAQSKYGFCGWNLWRQPIGFIVFLISSLAECERLPFDLPEAEEELVAGYQTEYSGIKSGLFYVASYLNLLVSSLFVTVLYLGGWNLSIPYISIPELFGINKTGGVFGSTIGILITLAKAYLFLFVPITTRWTLPRMRMDQLLNLGWKFLLPIALGNLLLTTSSQLLSF</sequence>
<accession>A6MN00</accession>
<geneLocation type="chloroplast"/>
<organism>
    <name type="scientific">Illicium oligandrum</name>
    <name type="common">Star anise</name>
    <dbReference type="NCBI Taxonomy" id="145286"/>
    <lineage>
        <taxon>Eukaryota</taxon>
        <taxon>Viridiplantae</taxon>
        <taxon>Streptophyta</taxon>
        <taxon>Embryophyta</taxon>
        <taxon>Tracheophyta</taxon>
        <taxon>Spermatophyta</taxon>
        <taxon>Magnoliopsida</taxon>
        <taxon>Austrobaileyales</taxon>
        <taxon>Schisandraceae</taxon>
        <taxon>Illicium</taxon>
    </lineage>
</organism>